<dbReference type="EC" id="4.1.1.65" evidence="1"/>
<dbReference type="EMBL" id="CP000941">
    <property type="protein sequence ID" value="ACA11713.1"/>
    <property type="molecule type" value="Genomic_DNA"/>
</dbReference>
<dbReference type="SMR" id="B0U6J7"/>
<dbReference type="KEGG" id="xfm:Xfasm12_0718"/>
<dbReference type="HOGENOM" id="CLU_029061_4_1_6"/>
<dbReference type="UniPathway" id="UPA00558">
    <property type="reaction ID" value="UER00616"/>
</dbReference>
<dbReference type="GO" id="GO:0005886">
    <property type="term" value="C:plasma membrane"/>
    <property type="evidence" value="ECO:0007669"/>
    <property type="project" value="UniProtKB-SubCell"/>
</dbReference>
<dbReference type="GO" id="GO:0004609">
    <property type="term" value="F:phosphatidylserine decarboxylase activity"/>
    <property type="evidence" value="ECO:0007669"/>
    <property type="project" value="UniProtKB-UniRule"/>
</dbReference>
<dbReference type="GO" id="GO:0006646">
    <property type="term" value="P:phosphatidylethanolamine biosynthetic process"/>
    <property type="evidence" value="ECO:0007669"/>
    <property type="project" value="UniProtKB-UniRule"/>
</dbReference>
<dbReference type="HAMAP" id="MF_00662">
    <property type="entry name" value="PS_decarb_PSD_B_type1"/>
    <property type="match status" value="1"/>
</dbReference>
<dbReference type="InterPro" id="IPR003817">
    <property type="entry name" value="PS_Dcarbxylase"/>
</dbReference>
<dbReference type="InterPro" id="IPR033177">
    <property type="entry name" value="PSD-B"/>
</dbReference>
<dbReference type="InterPro" id="IPR033178">
    <property type="entry name" value="PSD_type1_pro"/>
</dbReference>
<dbReference type="NCBIfam" id="TIGR00163">
    <property type="entry name" value="PS_decarb"/>
    <property type="match status" value="1"/>
</dbReference>
<dbReference type="PANTHER" id="PTHR10067">
    <property type="entry name" value="PHOSPHATIDYLSERINE DECARBOXYLASE"/>
    <property type="match status" value="1"/>
</dbReference>
<dbReference type="PANTHER" id="PTHR10067:SF6">
    <property type="entry name" value="PHOSPHATIDYLSERINE DECARBOXYLASE PROENZYME, MITOCHONDRIAL"/>
    <property type="match status" value="1"/>
</dbReference>
<dbReference type="Pfam" id="PF02666">
    <property type="entry name" value="PS_Dcarbxylase"/>
    <property type="match status" value="1"/>
</dbReference>
<feature type="chain" id="PRO_1000131420" description="Phosphatidylserine decarboxylase beta chain" evidence="1">
    <location>
        <begin position="1"/>
        <end position="246"/>
    </location>
</feature>
<feature type="chain" id="PRO_1000131421" description="Phosphatidylserine decarboxylase alpha chain" evidence="1">
    <location>
        <begin position="247"/>
        <end position="293"/>
    </location>
</feature>
<feature type="active site" description="Charge relay system; for autoendoproteolytic cleavage activity" evidence="1">
    <location>
        <position position="88"/>
    </location>
</feature>
<feature type="active site" description="Charge relay system; for autoendoproteolytic cleavage activity" evidence="1">
    <location>
        <position position="144"/>
    </location>
</feature>
<feature type="active site" description="Charge relay system; for autoendoproteolytic cleavage activity" evidence="1">
    <location>
        <position position="247"/>
    </location>
</feature>
<feature type="active site" description="Schiff-base intermediate with substrate; via pyruvic acid; for decarboxylase activity" evidence="1">
    <location>
        <position position="247"/>
    </location>
</feature>
<feature type="site" description="Cleavage (non-hydrolytic); by autocatalysis" evidence="1">
    <location>
        <begin position="246"/>
        <end position="247"/>
    </location>
</feature>
<feature type="modified residue" description="Pyruvic acid (Ser); by autocatalysis" evidence="1">
    <location>
        <position position="247"/>
    </location>
</feature>
<protein>
    <recommendedName>
        <fullName evidence="1">Phosphatidylserine decarboxylase proenzyme</fullName>
        <ecNumber evidence="1">4.1.1.65</ecNumber>
    </recommendedName>
    <component>
        <recommendedName>
            <fullName evidence="1">Phosphatidylserine decarboxylase alpha chain</fullName>
        </recommendedName>
    </component>
    <component>
        <recommendedName>
            <fullName evidence="1">Phosphatidylserine decarboxylase beta chain</fullName>
        </recommendedName>
    </component>
</protein>
<organism>
    <name type="scientific">Xylella fastidiosa (strain M12)</name>
    <dbReference type="NCBI Taxonomy" id="405440"/>
    <lineage>
        <taxon>Bacteria</taxon>
        <taxon>Pseudomonadati</taxon>
        <taxon>Pseudomonadota</taxon>
        <taxon>Gammaproteobacteria</taxon>
        <taxon>Lysobacterales</taxon>
        <taxon>Lysobacteraceae</taxon>
        <taxon>Xylella</taxon>
    </lineage>
</organism>
<name>PSD_XYLFM</name>
<reference key="1">
    <citation type="journal article" date="2010" name="J. Bacteriol.">
        <title>Whole genome sequences of two Xylella fastidiosa strains (M12 and M23) causing almond leaf scorch disease in California.</title>
        <authorList>
            <person name="Chen J."/>
            <person name="Xie G."/>
            <person name="Han S."/>
            <person name="Chertkov O."/>
            <person name="Sims D."/>
            <person name="Civerolo E.L."/>
        </authorList>
    </citation>
    <scope>NUCLEOTIDE SEQUENCE [LARGE SCALE GENOMIC DNA]</scope>
    <source>
        <strain>M12</strain>
    </source>
</reference>
<comment type="function">
    <text evidence="1">Catalyzes the formation of phosphatidylethanolamine (PtdEtn) from phosphatidylserine (PtdSer).</text>
</comment>
<comment type="catalytic activity">
    <reaction evidence="1">
        <text>a 1,2-diacyl-sn-glycero-3-phospho-L-serine + H(+) = a 1,2-diacyl-sn-glycero-3-phosphoethanolamine + CO2</text>
        <dbReference type="Rhea" id="RHEA:20828"/>
        <dbReference type="ChEBI" id="CHEBI:15378"/>
        <dbReference type="ChEBI" id="CHEBI:16526"/>
        <dbReference type="ChEBI" id="CHEBI:57262"/>
        <dbReference type="ChEBI" id="CHEBI:64612"/>
        <dbReference type="EC" id="4.1.1.65"/>
    </reaction>
</comment>
<comment type="cofactor">
    <cofactor evidence="1">
        <name>pyruvate</name>
        <dbReference type="ChEBI" id="CHEBI:15361"/>
    </cofactor>
    <text evidence="1">Binds 1 pyruvoyl group covalently per subunit.</text>
</comment>
<comment type="pathway">
    <text evidence="1">Phospholipid metabolism; phosphatidylethanolamine biosynthesis; phosphatidylethanolamine from CDP-diacylglycerol: step 2/2.</text>
</comment>
<comment type="subunit">
    <text evidence="1">Heterodimer of a large membrane-associated beta subunit and a small pyruvoyl-containing alpha subunit.</text>
</comment>
<comment type="subcellular location">
    <subcellularLocation>
        <location evidence="1">Cell membrane</location>
        <topology evidence="1">Peripheral membrane protein</topology>
    </subcellularLocation>
</comment>
<comment type="PTM">
    <text evidence="1">Is synthesized initially as an inactive proenzyme. Formation of the active enzyme involves a self-maturation process in which the active site pyruvoyl group is generated from an internal serine residue via an autocatalytic post-translational modification. Two non-identical subunits are generated from the proenzyme in this reaction, and the pyruvate is formed at the N-terminus of the alpha chain, which is derived from the carboxyl end of the proenzyme. The autoendoproteolytic cleavage occurs by a canonical serine protease mechanism, in which the side chain hydroxyl group of the serine supplies its oxygen atom to form the C-terminus of the beta chain, while the remainder of the serine residue undergoes an oxidative deamination to produce ammonia and the pyruvoyl prosthetic group on the alpha chain. During this reaction, the Ser that is part of the protease active site of the proenzyme becomes the pyruvoyl prosthetic group, which constitutes an essential element of the active site of the mature decarboxylase.</text>
</comment>
<comment type="similarity">
    <text evidence="1">Belongs to the phosphatidylserine decarboxylase family. PSD-B subfamily. Prokaryotic type I sub-subfamily.</text>
</comment>
<evidence type="ECO:0000255" key="1">
    <source>
        <dbReference type="HAMAP-Rule" id="MF_00662"/>
    </source>
</evidence>
<gene>
    <name evidence="1" type="primary">psd</name>
    <name type="ordered locus">Xfasm12_0718</name>
</gene>
<keyword id="KW-1003">Cell membrane</keyword>
<keyword id="KW-0210">Decarboxylase</keyword>
<keyword id="KW-0444">Lipid biosynthesis</keyword>
<keyword id="KW-0443">Lipid metabolism</keyword>
<keyword id="KW-0456">Lyase</keyword>
<keyword id="KW-0472">Membrane</keyword>
<keyword id="KW-0594">Phospholipid biosynthesis</keyword>
<keyword id="KW-1208">Phospholipid metabolism</keyword>
<keyword id="KW-0670">Pyruvate</keyword>
<keyword id="KW-0865">Zymogen</keyword>
<accession>B0U6J7</accession>
<proteinExistence type="inferred from homology"/>
<sequence>MNFVTTLTYLLPHRMLSSLARHIAYCQHPLIKQWLIDTVIAKFDVNLSEAAEPDAHAYPSFNAFFTRSLKAGIRLPDPNPDTLLMPADGRISQLGPIREGRIFQAKGQSFTATELLGDTAAASAFTNGLFATVYLSPRDYHRVHMPCTGQLLKTVHVPGRLFSVGPDAVRQIPRLFARNERLVCHFDTAFGPMVLVMVGALLVSGVETVWGGVEIPAYGDRITHKDYQGRNIAIERFAEMARFNYGSTVIVLLPPNVFTLAPHLTAESPVTLGQALAHRLSLNHSTQAPTQEK</sequence>